<dbReference type="EC" id="6.1.1.4" evidence="1"/>
<dbReference type="EMBL" id="CP001340">
    <property type="protein sequence ID" value="ACL97330.1"/>
    <property type="molecule type" value="Genomic_DNA"/>
</dbReference>
<dbReference type="RefSeq" id="WP_010921576.1">
    <property type="nucleotide sequence ID" value="NC_011916.1"/>
</dbReference>
<dbReference type="RefSeq" id="YP_002519238.1">
    <property type="nucleotide sequence ID" value="NC_011916.1"/>
</dbReference>
<dbReference type="SMR" id="B8GW27"/>
<dbReference type="GeneID" id="7332713"/>
<dbReference type="KEGG" id="ccs:CCNA_03865"/>
<dbReference type="PATRIC" id="fig|565050.3.peg.3770"/>
<dbReference type="HOGENOM" id="CLU_004427_0_0_5"/>
<dbReference type="OrthoDB" id="9810365at2"/>
<dbReference type="PhylomeDB" id="B8GW27"/>
<dbReference type="Proteomes" id="UP000001364">
    <property type="component" value="Chromosome"/>
</dbReference>
<dbReference type="GO" id="GO:0005829">
    <property type="term" value="C:cytosol"/>
    <property type="evidence" value="ECO:0007669"/>
    <property type="project" value="TreeGrafter"/>
</dbReference>
<dbReference type="GO" id="GO:0002161">
    <property type="term" value="F:aminoacyl-tRNA deacylase activity"/>
    <property type="evidence" value="ECO:0007669"/>
    <property type="project" value="InterPro"/>
</dbReference>
<dbReference type="GO" id="GO:0005524">
    <property type="term" value="F:ATP binding"/>
    <property type="evidence" value="ECO:0007669"/>
    <property type="project" value="UniProtKB-UniRule"/>
</dbReference>
<dbReference type="GO" id="GO:0004823">
    <property type="term" value="F:leucine-tRNA ligase activity"/>
    <property type="evidence" value="ECO:0007669"/>
    <property type="project" value="UniProtKB-UniRule"/>
</dbReference>
<dbReference type="GO" id="GO:0006429">
    <property type="term" value="P:leucyl-tRNA aminoacylation"/>
    <property type="evidence" value="ECO:0007669"/>
    <property type="project" value="UniProtKB-UniRule"/>
</dbReference>
<dbReference type="CDD" id="cd07958">
    <property type="entry name" value="Anticodon_Ia_Leu_BEm"/>
    <property type="match status" value="1"/>
</dbReference>
<dbReference type="CDD" id="cd00812">
    <property type="entry name" value="LeuRS_core"/>
    <property type="match status" value="1"/>
</dbReference>
<dbReference type="FunFam" id="1.10.730.10:FF:000002">
    <property type="entry name" value="Leucine--tRNA ligase"/>
    <property type="match status" value="1"/>
</dbReference>
<dbReference type="FunFam" id="3.40.50.620:FF:000003">
    <property type="entry name" value="Leucine--tRNA ligase"/>
    <property type="match status" value="1"/>
</dbReference>
<dbReference type="Gene3D" id="2.20.28.290">
    <property type="match status" value="1"/>
</dbReference>
<dbReference type="Gene3D" id="3.10.20.590">
    <property type="match status" value="1"/>
</dbReference>
<dbReference type="Gene3D" id="3.40.50.620">
    <property type="entry name" value="HUPs"/>
    <property type="match status" value="2"/>
</dbReference>
<dbReference type="Gene3D" id="1.10.730.10">
    <property type="entry name" value="Isoleucyl-tRNA Synthetase, Domain 1"/>
    <property type="match status" value="2"/>
</dbReference>
<dbReference type="Gene3D" id="3.90.740.10">
    <property type="entry name" value="Valyl/Leucyl/Isoleucyl-tRNA synthetase, editing domain"/>
    <property type="match status" value="1"/>
</dbReference>
<dbReference type="HAMAP" id="MF_00049_B">
    <property type="entry name" value="Leu_tRNA_synth_B"/>
    <property type="match status" value="1"/>
</dbReference>
<dbReference type="InterPro" id="IPR001412">
    <property type="entry name" value="aa-tRNA-synth_I_CS"/>
</dbReference>
<dbReference type="InterPro" id="IPR002300">
    <property type="entry name" value="aa-tRNA-synth_Ia"/>
</dbReference>
<dbReference type="InterPro" id="IPR002302">
    <property type="entry name" value="Leu-tRNA-ligase"/>
</dbReference>
<dbReference type="InterPro" id="IPR025709">
    <property type="entry name" value="Leu_tRNA-synth_edit"/>
</dbReference>
<dbReference type="InterPro" id="IPR013155">
    <property type="entry name" value="M/V/L/I-tRNA-synth_anticd-bd"/>
</dbReference>
<dbReference type="InterPro" id="IPR015413">
    <property type="entry name" value="Methionyl/Leucyl_tRNA_Synth"/>
</dbReference>
<dbReference type="InterPro" id="IPR014729">
    <property type="entry name" value="Rossmann-like_a/b/a_fold"/>
</dbReference>
<dbReference type="InterPro" id="IPR009080">
    <property type="entry name" value="tRNAsynth_Ia_anticodon-bd"/>
</dbReference>
<dbReference type="InterPro" id="IPR009008">
    <property type="entry name" value="Val/Leu/Ile-tRNA-synth_edit"/>
</dbReference>
<dbReference type="NCBIfam" id="TIGR00396">
    <property type="entry name" value="leuS_bact"/>
    <property type="match status" value="1"/>
</dbReference>
<dbReference type="PANTHER" id="PTHR43740:SF2">
    <property type="entry name" value="LEUCINE--TRNA LIGASE, MITOCHONDRIAL"/>
    <property type="match status" value="1"/>
</dbReference>
<dbReference type="PANTHER" id="PTHR43740">
    <property type="entry name" value="LEUCYL-TRNA SYNTHETASE"/>
    <property type="match status" value="1"/>
</dbReference>
<dbReference type="Pfam" id="PF08264">
    <property type="entry name" value="Anticodon_1"/>
    <property type="match status" value="1"/>
</dbReference>
<dbReference type="Pfam" id="PF00133">
    <property type="entry name" value="tRNA-synt_1"/>
    <property type="match status" value="2"/>
</dbReference>
<dbReference type="Pfam" id="PF13603">
    <property type="entry name" value="tRNA-synt_1_2"/>
    <property type="match status" value="1"/>
</dbReference>
<dbReference type="Pfam" id="PF09334">
    <property type="entry name" value="tRNA-synt_1g"/>
    <property type="match status" value="1"/>
</dbReference>
<dbReference type="PRINTS" id="PR00985">
    <property type="entry name" value="TRNASYNTHLEU"/>
</dbReference>
<dbReference type="SUPFAM" id="SSF47323">
    <property type="entry name" value="Anticodon-binding domain of a subclass of class I aminoacyl-tRNA synthetases"/>
    <property type="match status" value="1"/>
</dbReference>
<dbReference type="SUPFAM" id="SSF52374">
    <property type="entry name" value="Nucleotidylyl transferase"/>
    <property type="match status" value="1"/>
</dbReference>
<dbReference type="SUPFAM" id="SSF50677">
    <property type="entry name" value="ValRS/IleRS/LeuRS editing domain"/>
    <property type="match status" value="1"/>
</dbReference>
<dbReference type="PROSITE" id="PS00178">
    <property type="entry name" value="AA_TRNA_LIGASE_I"/>
    <property type="match status" value="1"/>
</dbReference>
<comment type="catalytic activity">
    <reaction evidence="1">
        <text>tRNA(Leu) + L-leucine + ATP = L-leucyl-tRNA(Leu) + AMP + diphosphate</text>
        <dbReference type="Rhea" id="RHEA:11688"/>
        <dbReference type="Rhea" id="RHEA-COMP:9613"/>
        <dbReference type="Rhea" id="RHEA-COMP:9622"/>
        <dbReference type="ChEBI" id="CHEBI:30616"/>
        <dbReference type="ChEBI" id="CHEBI:33019"/>
        <dbReference type="ChEBI" id="CHEBI:57427"/>
        <dbReference type="ChEBI" id="CHEBI:78442"/>
        <dbReference type="ChEBI" id="CHEBI:78494"/>
        <dbReference type="ChEBI" id="CHEBI:456215"/>
        <dbReference type="EC" id="6.1.1.4"/>
    </reaction>
</comment>
<comment type="subcellular location">
    <subcellularLocation>
        <location evidence="1">Cytoplasm</location>
    </subcellularLocation>
</comment>
<comment type="similarity">
    <text evidence="1">Belongs to the class-I aminoacyl-tRNA synthetase family.</text>
</comment>
<gene>
    <name evidence="1" type="primary">leuS</name>
    <name type="ordered locus">CCNA_03865</name>
</gene>
<accession>B8GW27</accession>
<keyword id="KW-0030">Aminoacyl-tRNA synthetase</keyword>
<keyword id="KW-0067">ATP-binding</keyword>
<keyword id="KW-0963">Cytoplasm</keyword>
<keyword id="KW-0436">Ligase</keyword>
<keyword id="KW-0547">Nucleotide-binding</keyword>
<keyword id="KW-0648">Protein biosynthesis</keyword>
<keyword id="KW-1185">Reference proteome</keyword>
<organism>
    <name type="scientific">Caulobacter vibrioides (strain NA1000 / CB15N)</name>
    <name type="common">Caulobacter crescentus</name>
    <dbReference type="NCBI Taxonomy" id="565050"/>
    <lineage>
        <taxon>Bacteria</taxon>
        <taxon>Pseudomonadati</taxon>
        <taxon>Pseudomonadota</taxon>
        <taxon>Alphaproteobacteria</taxon>
        <taxon>Caulobacterales</taxon>
        <taxon>Caulobacteraceae</taxon>
        <taxon>Caulobacter</taxon>
    </lineage>
</organism>
<sequence length="861" mass="95536">MARYNPKDTEPKWREAWAKADVFKTGEINDGRPKYYVLEMFPYPSGRIHMGHVRNYAMGDVVARYKRAQGFNVLHPMGWDAFGMPAENAAMERGVHPKGWTYDNIAAMREQLKSLGISVDWSREFATCDPEYYGKQQAWFLRLLKRGLVYRKEASVNWDPVDMTVLANEQVIDGKGWRSGAVVEKRKLTQWFLRITDYADALIDGLKTLDRWPDKVRLMQENWIGRSKGLRFKFQFDGEAPDGMAEGLEVYTTRPDTLFGASFVGIAPEHPLAEQLAAANPQIQTFIADCRKGGTSEAEIESAEKLGYDTGLRVKHPLDPSITLPVWIANFILMDYGTGAIFACPAHDQRDLDFARKYDLPVLPVVLPNGEDPATFTVGKEAYVGPGKIFNSKFLDGLDVEAAKAEAIARIEAANQGQGATVYRLRDWGVSRQRYWGCPIPVIHCEACGVVPVPEDQLPVALPDDVTFDKPGNPLLRHPTWRHTTCPSCGGKAERETDTLDTFIDSSWYFARFADTQAAEPVGKDAADHWLPVDQYIGGVEHAILHLLYARFITRALKDEGLLSVEEPFAGLFTQGMVTHEAYKNEAGEWVEPSDVVITTEGSTRTAKHAKTGAPIIIGDIEKMSKSKKNVVAPEDIFEAYGVDSARLFVMSDSPPERDVQWTNSGVEGSWRFTHRLWNEFDSQPAGDFAHDDSDEAALALRKAAHKLIGFVTDSIEGFRFNSGVARLYEFLNALKAAPAEGASQAVLAARAEALNILARLVAPFTPHLAEEAWARMGGEGMVVDAPWPKADPALAADDERVLPIQINGKRRGEIKVKAGAPDDEVTKIALADPNVMAHLEGLTVRKVIVVKDRIVNIVAN</sequence>
<name>SYL_CAUVN</name>
<protein>
    <recommendedName>
        <fullName evidence="1">Leucine--tRNA ligase</fullName>
        <ecNumber evidence="1">6.1.1.4</ecNumber>
    </recommendedName>
    <alternativeName>
        <fullName evidence="1">Leucyl-tRNA synthetase</fullName>
        <shortName evidence="1">LeuRS</shortName>
    </alternativeName>
</protein>
<evidence type="ECO:0000255" key="1">
    <source>
        <dbReference type="HAMAP-Rule" id="MF_00049"/>
    </source>
</evidence>
<feature type="chain" id="PRO_1000199187" description="Leucine--tRNA ligase">
    <location>
        <begin position="1"/>
        <end position="861"/>
    </location>
</feature>
<feature type="short sequence motif" description="'HIGH' region">
    <location>
        <begin position="42"/>
        <end position="52"/>
    </location>
</feature>
<feature type="short sequence motif" description="'KMSKS' region">
    <location>
        <begin position="623"/>
        <end position="627"/>
    </location>
</feature>
<feature type="binding site" evidence="1">
    <location>
        <position position="626"/>
    </location>
    <ligand>
        <name>ATP</name>
        <dbReference type="ChEBI" id="CHEBI:30616"/>
    </ligand>
</feature>
<proteinExistence type="inferred from homology"/>
<reference key="1">
    <citation type="journal article" date="2010" name="J. Bacteriol.">
        <title>The genetic basis of laboratory adaptation in Caulobacter crescentus.</title>
        <authorList>
            <person name="Marks M.E."/>
            <person name="Castro-Rojas C.M."/>
            <person name="Teiling C."/>
            <person name="Du L."/>
            <person name="Kapatral V."/>
            <person name="Walunas T.L."/>
            <person name="Crosson S."/>
        </authorList>
    </citation>
    <scope>NUCLEOTIDE SEQUENCE [LARGE SCALE GENOMIC DNA]</scope>
    <source>
        <strain>NA1000 / CB15N</strain>
    </source>
</reference>